<evidence type="ECO:0000250" key="1">
    <source>
        <dbReference type="UniProtKB" id="A0A0P0UTJ1"/>
    </source>
</evidence>
<evidence type="ECO:0000255" key="2"/>
<evidence type="ECO:0000303" key="3">
    <source>
    </source>
</evidence>
<evidence type="ECO:0000305" key="4"/>
<evidence type="ECO:0000305" key="5">
    <source>
    </source>
</evidence>
<proteinExistence type="evidence at transcript level"/>
<sequence length="61" mass="6824">PILIFAFVMFAVMVNAKPSIDDAEMKREPKPNIINAPCSGCYYQVGNECVYDKLKCGPVRK</sequence>
<comment type="function">
    <text evidence="1">Toxin that is lethal to crab. Does not produce the typical symptoms associated with sodium channel toxins in crabs, suggesting that it likely does not act on sodium channels.</text>
</comment>
<comment type="subcellular location">
    <subcellularLocation>
        <location evidence="5">Secreted</location>
    </subcellularLocation>
    <subcellularLocation>
        <location evidence="4">Nematocyst</location>
    </subcellularLocation>
</comment>
<comment type="miscellaneous">
    <text evidence="4">A synonymy between H.magnifica and R.crispa is controversial.</text>
</comment>
<comment type="similarity">
    <text evidence="4">Belongs to the Hau1a/HC18/HC19 family.</text>
</comment>
<keyword id="KW-1015">Disulfide bond</keyword>
<keyword id="KW-0379">Hydroxylation</keyword>
<keyword id="KW-0166">Nematocyst</keyword>
<keyword id="KW-0964">Secreted</keyword>
<keyword id="KW-0732">Signal</keyword>
<keyword id="KW-0800">Toxin</keyword>
<name>TX1B_RADCR</name>
<accession>P0DY25</accession>
<protein>
    <recommendedName>
        <fullName evidence="4">U-stichotoxin-Hcr1b</fullName>
        <shortName evidence="4">U-SHTX-Hcr1b</shortName>
    </recommendedName>
    <alternativeName>
        <fullName evidence="3">HC-19</fullName>
    </alternativeName>
</protein>
<organism>
    <name type="scientific">Radianthus crispa</name>
    <name type="common">Leathery sea anemone</name>
    <name type="synonym">Heteractis crispa</name>
    <dbReference type="NCBI Taxonomy" id="3122430"/>
    <lineage>
        <taxon>Eukaryota</taxon>
        <taxon>Metazoa</taxon>
        <taxon>Cnidaria</taxon>
        <taxon>Anthozoa</taxon>
        <taxon>Hexacorallia</taxon>
        <taxon>Actiniaria</taxon>
        <taxon>Stichodactylidae</taxon>
        <taxon>Radianthus</taxon>
    </lineage>
</organism>
<reference key="1">
    <citation type="journal article" date="2024" name="Sci. Rep.">
        <title>Diversity analysis of sea anemone peptide toxins in different tissues of Heteractis crispa based on transcriptomics.</title>
        <authorList>
            <person name="Guo Q."/>
            <person name="Fu J."/>
            <person name="Yuan L."/>
            <person name="Liao Y."/>
            <person name="Li M."/>
            <person name="Li X."/>
            <person name="Yi B."/>
            <person name="Zhang J."/>
            <person name="Gao B."/>
        </authorList>
    </citation>
    <scope>NUCLEOTIDE SEQUENCE [MRNA]</scope>
</reference>
<feature type="signal peptide" evidence="2">
    <location>
        <begin position="1" status="less than"/>
        <end position="19"/>
    </location>
</feature>
<feature type="propeptide" id="PRO_0000462066" evidence="1">
    <location>
        <begin position="20"/>
        <end position="31"/>
    </location>
</feature>
<feature type="peptide" id="PRO_0000462067" description="U-stichotoxin-Hcr1b">
    <location>
        <begin position="32"/>
        <end position="59"/>
    </location>
</feature>
<feature type="disulfide bond" evidence="4">
    <location>
        <begin position="38"/>
        <end position="49"/>
    </location>
</feature>
<feature type="disulfide bond" evidence="4">
    <location>
        <begin position="41"/>
        <end position="56"/>
    </location>
</feature>
<feature type="non-terminal residue" evidence="4">
    <location>
        <position position="1"/>
    </location>
</feature>